<protein>
    <recommendedName>
        <fullName>BURP domain-containing protein 6</fullName>
        <shortName>OsBURP06</shortName>
    </recommendedName>
</protein>
<evidence type="ECO:0000255" key="1"/>
<evidence type="ECO:0000255" key="2">
    <source>
        <dbReference type="PROSITE-ProRule" id="PRU00604"/>
    </source>
</evidence>
<evidence type="ECO:0000269" key="3">
    <source>
    </source>
</evidence>
<accession>Q6I5B2</accession>
<accession>C7J2Q6</accession>
<feature type="signal peptide" evidence="1">
    <location>
        <begin position="1"/>
        <end position="19"/>
    </location>
</feature>
<feature type="chain" id="PRO_0000375833" description="BURP domain-containing protein 6">
    <location>
        <begin position="20"/>
        <end position="239"/>
    </location>
</feature>
<feature type="domain" description="BURP" evidence="2">
    <location>
        <begin position="28"/>
        <end position="239"/>
    </location>
</feature>
<dbReference type="EMBL" id="AC108498">
    <property type="protein sequence ID" value="AAT47015.1"/>
    <property type="molecule type" value="Genomic_DNA"/>
</dbReference>
<dbReference type="EMBL" id="AC136226">
    <property type="protein sequence ID" value="AAT47112.1"/>
    <property type="molecule type" value="Genomic_DNA"/>
</dbReference>
<dbReference type="EMBL" id="AP008211">
    <property type="protein sequence ID" value="BAH93006.1"/>
    <property type="molecule type" value="Genomic_DNA"/>
</dbReference>
<dbReference type="EMBL" id="AP014961">
    <property type="protein sequence ID" value="BAS92827.1"/>
    <property type="molecule type" value="Genomic_DNA"/>
</dbReference>
<dbReference type="SMR" id="Q6I5B2"/>
<dbReference type="FunCoup" id="Q6I5B2">
    <property type="interactions" value="3"/>
</dbReference>
<dbReference type="STRING" id="39947.Q6I5B2"/>
<dbReference type="PaxDb" id="39947-Q6I5B2"/>
<dbReference type="EnsemblPlants" id="Os05t0215066-00">
    <property type="protein sequence ID" value="Os05t0215066-00"/>
    <property type="gene ID" value="Os05g0215066"/>
</dbReference>
<dbReference type="Gramene" id="Os05t0215066-00">
    <property type="protein sequence ID" value="Os05t0215066-00"/>
    <property type="gene ID" value="Os05g0215066"/>
</dbReference>
<dbReference type="KEGG" id="dosa:Os05g0215066"/>
<dbReference type="eggNOG" id="ENOG502QT2V">
    <property type="taxonomic scope" value="Eukaryota"/>
</dbReference>
<dbReference type="HOGENOM" id="CLU_011822_0_1_1"/>
<dbReference type="InParanoid" id="Q6I5B2"/>
<dbReference type="OMA" id="DASICHF"/>
<dbReference type="OrthoDB" id="678718at2759"/>
<dbReference type="Proteomes" id="UP000000763">
    <property type="component" value="Chromosome 5"/>
</dbReference>
<dbReference type="Proteomes" id="UP000059680">
    <property type="component" value="Chromosome 5"/>
</dbReference>
<dbReference type="InterPro" id="IPR044816">
    <property type="entry name" value="BURP"/>
</dbReference>
<dbReference type="InterPro" id="IPR004873">
    <property type="entry name" value="BURP_dom"/>
</dbReference>
<dbReference type="PANTHER" id="PTHR31236">
    <property type="entry name" value="BURP DOMAIN PROTEIN USPL1-LIKE"/>
    <property type="match status" value="1"/>
</dbReference>
<dbReference type="PANTHER" id="PTHR31236:SF31">
    <property type="entry name" value="BURP DOMAIN-CONTAINING PROTEIN 7"/>
    <property type="match status" value="1"/>
</dbReference>
<dbReference type="Pfam" id="PF03181">
    <property type="entry name" value="BURP"/>
    <property type="match status" value="1"/>
</dbReference>
<dbReference type="SMART" id="SM01045">
    <property type="entry name" value="BURP"/>
    <property type="match status" value="1"/>
</dbReference>
<dbReference type="PROSITE" id="PS51277">
    <property type="entry name" value="BURP"/>
    <property type="match status" value="1"/>
</dbReference>
<organism>
    <name type="scientific">Oryza sativa subsp. japonica</name>
    <name type="common">Rice</name>
    <dbReference type="NCBI Taxonomy" id="39947"/>
    <lineage>
        <taxon>Eukaryota</taxon>
        <taxon>Viridiplantae</taxon>
        <taxon>Streptophyta</taxon>
        <taxon>Embryophyta</taxon>
        <taxon>Tracheophyta</taxon>
        <taxon>Spermatophyta</taxon>
        <taxon>Magnoliopsida</taxon>
        <taxon>Liliopsida</taxon>
        <taxon>Poales</taxon>
        <taxon>Poaceae</taxon>
        <taxon>BOP clade</taxon>
        <taxon>Oryzoideae</taxon>
        <taxon>Oryzeae</taxon>
        <taxon>Oryzinae</taxon>
        <taxon>Oryza</taxon>
        <taxon>Oryza sativa</taxon>
    </lineage>
</organism>
<sequence>MPGAIRDLINPVSSAASASKEDTVNNVFFLEKDLFPGSKMTLHFTRATAGAALLPRGRADSVPFASEKLPEILSQLSVPAGSPAADAMRSTLAECEAAPQAGEAKRCATSLESMVEFAASSLGTRDVHAVSTEVDRAGPTPRQAYRVEAVRPVPVSGGDMVACHGMAYAYAVFGCHTTTAAAYTVTLAGADGTKAEALAACHTDAAPRVAEAYKRLGVAPGSVPVCHFLPQDDMLWVRN</sequence>
<reference key="1">
    <citation type="journal article" date="2005" name="Mol. Genet. Genomics">
        <title>A fine physical map of the rice chromosome 5.</title>
        <authorList>
            <person name="Cheng C.-H."/>
            <person name="Chung M.C."/>
            <person name="Liu S.-M."/>
            <person name="Chen S.-K."/>
            <person name="Kao F.Y."/>
            <person name="Lin S.-J."/>
            <person name="Hsiao S.-H."/>
            <person name="Tseng I.C."/>
            <person name="Hsing Y.-I.C."/>
            <person name="Wu H.-P."/>
            <person name="Chen C.-S."/>
            <person name="Shaw J.-F."/>
            <person name="Wu J."/>
            <person name="Matsumoto T."/>
            <person name="Sasaki T."/>
            <person name="Chen H.-C."/>
            <person name="Chow T.-Y."/>
        </authorList>
    </citation>
    <scope>NUCLEOTIDE SEQUENCE [LARGE SCALE GENOMIC DNA]</scope>
    <source>
        <strain>cv. Nipponbare</strain>
    </source>
</reference>
<reference key="2">
    <citation type="journal article" date="2005" name="Nature">
        <title>The map-based sequence of the rice genome.</title>
        <authorList>
            <consortium name="International rice genome sequencing project (IRGSP)"/>
        </authorList>
    </citation>
    <scope>NUCLEOTIDE SEQUENCE [LARGE SCALE GENOMIC DNA]</scope>
    <source>
        <strain>cv. Nipponbare</strain>
    </source>
</reference>
<reference key="3">
    <citation type="journal article" date="2008" name="Nucleic Acids Res.">
        <title>The rice annotation project database (RAP-DB): 2008 update.</title>
        <authorList>
            <consortium name="The rice annotation project (RAP)"/>
        </authorList>
    </citation>
    <scope>GENOME REANNOTATION</scope>
    <source>
        <strain>cv. Nipponbare</strain>
    </source>
</reference>
<reference key="4">
    <citation type="journal article" date="2013" name="Rice">
        <title>Improvement of the Oryza sativa Nipponbare reference genome using next generation sequence and optical map data.</title>
        <authorList>
            <person name="Kawahara Y."/>
            <person name="de la Bastide M."/>
            <person name="Hamilton J.P."/>
            <person name="Kanamori H."/>
            <person name="McCombie W.R."/>
            <person name="Ouyang S."/>
            <person name="Schwartz D.C."/>
            <person name="Tanaka T."/>
            <person name="Wu J."/>
            <person name="Zhou S."/>
            <person name="Childs K.L."/>
            <person name="Davidson R.M."/>
            <person name="Lin H."/>
            <person name="Quesada-Ocampo L."/>
            <person name="Vaillancourt B."/>
            <person name="Sakai H."/>
            <person name="Lee S.S."/>
            <person name="Kim J."/>
            <person name="Numa H."/>
            <person name="Itoh T."/>
            <person name="Buell C.R."/>
            <person name="Matsumoto T."/>
        </authorList>
    </citation>
    <scope>GENOME REANNOTATION</scope>
    <source>
        <strain>cv. Nipponbare</strain>
    </source>
</reference>
<reference key="5">
    <citation type="journal article" date="2009" name="Planta">
        <title>Genome-wide identification of BURP domain-containing genes in rice reveals a gene family with diverse structures and responses to abiotic stresses.</title>
        <authorList>
            <person name="Ding X."/>
            <person name="Hou X."/>
            <person name="Xie K."/>
            <person name="Xiong L."/>
        </authorList>
    </citation>
    <scope>TISSUE SPECIFICITY</scope>
    <scope>GENE NOMENCLATURE</scope>
</reference>
<keyword id="KW-1185">Reference proteome</keyword>
<keyword id="KW-0732">Signal</keyword>
<comment type="tissue specificity">
    <text evidence="3">Expressed in leaves and shoot.</text>
</comment>
<gene>
    <name type="primary">BURP6</name>
    <name type="ordered locus">Os05g0215066</name>
    <name type="ordered locus">LOC_Os05g12410</name>
    <name type="ORF">OJ1076_H08.2</name>
    <name type="ORF">OSJNBb0067H15.19</name>
</gene>
<name>BURP6_ORYSJ</name>
<proteinExistence type="evidence at transcript level"/>